<protein>
    <recommendedName>
        <fullName>Probable ATP-dependent RNA helicase DDX5</fullName>
        <ecNumber>3.6.4.13</ecNumber>
    </recommendedName>
    <alternativeName>
        <fullName>DEAD box RNA helicase DEAD1</fullName>
        <shortName>mDEAD1</shortName>
    </alternativeName>
    <alternativeName>
        <fullName>DEAD box protein 5</fullName>
    </alternativeName>
    <alternativeName>
        <fullName>RNA helicase p68</fullName>
    </alternativeName>
</protein>
<keyword id="KW-0007">Acetylation</keyword>
<keyword id="KW-0067">ATP-binding</keyword>
<keyword id="KW-0090">Biological rhythms</keyword>
<keyword id="KW-0963">Cytoplasm</keyword>
<keyword id="KW-0347">Helicase</keyword>
<keyword id="KW-0378">Hydrolase</keyword>
<keyword id="KW-1017">Isopeptide bond</keyword>
<keyword id="KW-0488">Methylation</keyword>
<keyword id="KW-0507">mRNA processing</keyword>
<keyword id="KW-0508">mRNA splicing</keyword>
<keyword id="KW-0547">Nucleotide-binding</keyword>
<keyword id="KW-0539">Nucleus</keyword>
<keyword id="KW-0597">Phosphoprotein</keyword>
<keyword id="KW-1185">Reference proteome</keyword>
<keyword id="KW-0694">RNA-binding</keyword>
<keyword id="KW-0747">Spliceosome</keyword>
<keyword id="KW-0804">Transcription</keyword>
<keyword id="KW-0805">Transcription regulation</keyword>
<keyword id="KW-0832">Ubl conjugation</keyword>
<name>DDX5_MOUSE</name>
<evidence type="ECO:0000250" key="1"/>
<evidence type="ECO:0000250" key="2">
    <source>
        <dbReference type="UniProtKB" id="P17844"/>
    </source>
</evidence>
<evidence type="ECO:0000255" key="3">
    <source>
        <dbReference type="PROSITE-ProRule" id="PRU00541"/>
    </source>
</evidence>
<evidence type="ECO:0000255" key="4">
    <source>
        <dbReference type="PROSITE-ProRule" id="PRU00542"/>
    </source>
</evidence>
<evidence type="ECO:0000256" key="5">
    <source>
        <dbReference type="SAM" id="MobiDB-lite"/>
    </source>
</evidence>
<evidence type="ECO:0000269" key="6">
    <source>
    </source>
</evidence>
<evidence type="ECO:0000269" key="7">
    <source>
    </source>
</evidence>
<evidence type="ECO:0000269" key="8">
    <source>
    </source>
</evidence>
<evidence type="ECO:0000269" key="9">
    <source>
    </source>
</evidence>
<evidence type="ECO:0000269" key="10">
    <source>
    </source>
</evidence>
<evidence type="ECO:0000305" key="11"/>
<evidence type="ECO:0007744" key="12">
    <source>
    </source>
</evidence>
<organism>
    <name type="scientific">Mus musculus</name>
    <name type="common">Mouse</name>
    <dbReference type="NCBI Taxonomy" id="10090"/>
    <lineage>
        <taxon>Eukaryota</taxon>
        <taxon>Metazoa</taxon>
        <taxon>Chordata</taxon>
        <taxon>Craniata</taxon>
        <taxon>Vertebrata</taxon>
        <taxon>Euteleostomi</taxon>
        <taxon>Mammalia</taxon>
        <taxon>Eutheria</taxon>
        <taxon>Euarchontoglires</taxon>
        <taxon>Glires</taxon>
        <taxon>Rodentia</taxon>
        <taxon>Myomorpha</taxon>
        <taxon>Muroidea</taxon>
        <taxon>Muridae</taxon>
        <taxon>Murinae</taxon>
        <taxon>Mus</taxon>
        <taxon>Mus</taxon>
    </lineage>
</organism>
<dbReference type="EC" id="3.6.4.13"/>
<dbReference type="EMBL" id="X65627">
    <property type="protein sequence ID" value="CAA46581.1"/>
    <property type="molecule type" value="mRNA"/>
</dbReference>
<dbReference type="EMBL" id="AL603664">
    <property type="status" value="NOT_ANNOTATED_CDS"/>
    <property type="molecule type" value="Genomic_DNA"/>
</dbReference>
<dbReference type="PIR" id="I48385">
    <property type="entry name" value="I48385"/>
</dbReference>
<dbReference type="SMR" id="Q61656"/>
<dbReference type="CORUM" id="Q61656"/>
<dbReference type="DIP" id="DIP-32293N"/>
<dbReference type="FunCoup" id="Q61656">
    <property type="interactions" value="3700"/>
</dbReference>
<dbReference type="IntAct" id="Q61656">
    <property type="interactions" value="22"/>
</dbReference>
<dbReference type="MINT" id="Q61656"/>
<dbReference type="STRING" id="10090.ENSMUSP00000021062"/>
<dbReference type="GlyGen" id="Q61656">
    <property type="glycosylation" value="2 sites, 1 O-linked glycan (2 sites)"/>
</dbReference>
<dbReference type="iPTMnet" id="Q61656"/>
<dbReference type="PhosphoSitePlus" id="Q61656"/>
<dbReference type="SwissPalm" id="Q61656"/>
<dbReference type="jPOST" id="Q61656"/>
<dbReference type="PaxDb" id="10090-ENSMUSP00000021062"/>
<dbReference type="ProteomicsDB" id="277972"/>
<dbReference type="Pumba" id="Q61656"/>
<dbReference type="AGR" id="MGI:105037"/>
<dbReference type="MGI" id="MGI:105037">
    <property type="gene designation" value="Ddx5"/>
</dbReference>
<dbReference type="eggNOG" id="KOG0331">
    <property type="taxonomic scope" value="Eukaryota"/>
</dbReference>
<dbReference type="InParanoid" id="Q61656"/>
<dbReference type="BRENDA" id="3.6.4.13">
    <property type="organism ID" value="3474"/>
</dbReference>
<dbReference type="Reactome" id="R-MMU-3899300">
    <property type="pathway name" value="SUMOylation of transcription cofactors"/>
</dbReference>
<dbReference type="Reactome" id="R-MMU-72163">
    <property type="pathway name" value="mRNA Splicing - Major Pathway"/>
</dbReference>
<dbReference type="Reactome" id="R-MMU-9018519">
    <property type="pathway name" value="Estrogen-dependent gene expression"/>
</dbReference>
<dbReference type="CD-CODE" id="764D0258">
    <property type="entry name" value="Neuronal RNP granule"/>
</dbReference>
<dbReference type="CD-CODE" id="CE726F99">
    <property type="entry name" value="Postsynaptic density"/>
</dbReference>
<dbReference type="CD-CODE" id="DE1E139C">
    <property type="entry name" value="Chromatoid body"/>
</dbReference>
<dbReference type="ChiTaRS" id="Ddx5">
    <property type="organism name" value="mouse"/>
</dbReference>
<dbReference type="PRO" id="PR:Q61656"/>
<dbReference type="Proteomes" id="UP000000589">
    <property type="component" value="Unplaced"/>
</dbReference>
<dbReference type="RNAct" id="Q61656">
    <property type="molecule type" value="protein"/>
</dbReference>
<dbReference type="GO" id="GO:0005737">
    <property type="term" value="C:cytoplasm"/>
    <property type="evidence" value="ECO:0007669"/>
    <property type="project" value="UniProtKB-SubCell"/>
</dbReference>
<dbReference type="GO" id="GO:0016607">
    <property type="term" value="C:nuclear speck"/>
    <property type="evidence" value="ECO:0000250"/>
    <property type="project" value="UniProtKB"/>
</dbReference>
<dbReference type="GO" id="GO:0005730">
    <property type="term" value="C:nucleolus"/>
    <property type="evidence" value="ECO:0000250"/>
    <property type="project" value="UniProtKB"/>
</dbReference>
<dbReference type="GO" id="GO:0005634">
    <property type="term" value="C:nucleus"/>
    <property type="evidence" value="ECO:0000250"/>
    <property type="project" value="UniProtKB"/>
</dbReference>
<dbReference type="GO" id="GO:1990904">
    <property type="term" value="C:ribonucleoprotein complex"/>
    <property type="evidence" value="ECO:0000266"/>
    <property type="project" value="MGI"/>
</dbReference>
<dbReference type="GO" id="GO:0005681">
    <property type="term" value="C:spliceosomal complex"/>
    <property type="evidence" value="ECO:0007669"/>
    <property type="project" value="UniProtKB-KW"/>
</dbReference>
<dbReference type="GO" id="GO:0005524">
    <property type="term" value="F:ATP binding"/>
    <property type="evidence" value="ECO:0007669"/>
    <property type="project" value="UniProtKB-KW"/>
</dbReference>
<dbReference type="GO" id="GO:0016887">
    <property type="term" value="F:ATP hydrolysis activity"/>
    <property type="evidence" value="ECO:0007669"/>
    <property type="project" value="RHEA"/>
</dbReference>
<dbReference type="GO" id="GO:0003730">
    <property type="term" value="F:mRNA 3'-UTR binding"/>
    <property type="evidence" value="ECO:0000250"/>
    <property type="project" value="UniProtKB"/>
</dbReference>
<dbReference type="GO" id="GO:0050681">
    <property type="term" value="F:nuclear androgen receptor binding"/>
    <property type="evidence" value="ECO:0000250"/>
    <property type="project" value="UniProtKB"/>
</dbReference>
<dbReference type="GO" id="GO:1990841">
    <property type="term" value="F:promoter-specific chromatin binding"/>
    <property type="evidence" value="ECO:0000314"/>
    <property type="project" value="UniProtKB"/>
</dbReference>
<dbReference type="GO" id="GO:0043021">
    <property type="term" value="F:ribonucleoprotein complex binding"/>
    <property type="evidence" value="ECO:0000250"/>
    <property type="project" value="UniProtKB"/>
</dbReference>
<dbReference type="GO" id="GO:0003723">
    <property type="term" value="F:RNA binding"/>
    <property type="evidence" value="ECO:0000314"/>
    <property type="project" value="MGI"/>
</dbReference>
<dbReference type="GO" id="GO:0003724">
    <property type="term" value="F:RNA helicase activity"/>
    <property type="evidence" value="ECO:0000250"/>
    <property type="project" value="UniProtKB"/>
</dbReference>
<dbReference type="GO" id="GO:0003712">
    <property type="term" value="F:transcription coregulator activity"/>
    <property type="evidence" value="ECO:0000314"/>
    <property type="project" value="MGI"/>
</dbReference>
<dbReference type="GO" id="GO:0000380">
    <property type="term" value="P:alternative mRNA splicing, via spliceosome"/>
    <property type="evidence" value="ECO:0000315"/>
    <property type="project" value="UniProtKB"/>
</dbReference>
<dbReference type="GO" id="GO:0030521">
    <property type="term" value="P:androgen receptor signaling pathway"/>
    <property type="evidence" value="ECO:0000250"/>
    <property type="project" value="UniProtKB"/>
</dbReference>
<dbReference type="GO" id="GO:0007623">
    <property type="term" value="P:circadian rhythm"/>
    <property type="evidence" value="ECO:0000315"/>
    <property type="project" value="MGI"/>
</dbReference>
<dbReference type="GO" id="GO:0001837">
    <property type="term" value="P:epithelial to mesenchymal transition"/>
    <property type="evidence" value="ECO:0000250"/>
    <property type="project" value="UniProtKB"/>
</dbReference>
<dbReference type="GO" id="GO:0030520">
    <property type="term" value="P:estrogen receptor signaling pathway"/>
    <property type="evidence" value="ECO:0000250"/>
    <property type="project" value="UniProtKB"/>
</dbReference>
<dbReference type="GO" id="GO:0072332">
    <property type="term" value="P:intrinsic apoptotic signaling pathway by p53 class mediator"/>
    <property type="evidence" value="ECO:0000250"/>
    <property type="project" value="UniProtKB"/>
</dbReference>
<dbReference type="GO" id="GO:0061614">
    <property type="term" value="P:miRNA transcription"/>
    <property type="evidence" value="ECO:0000315"/>
    <property type="project" value="UniProtKB"/>
</dbReference>
<dbReference type="GO" id="GO:0045445">
    <property type="term" value="P:myoblast differentiation"/>
    <property type="evidence" value="ECO:0000315"/>
    <property type="project" value="UniProtKB"/>
</dbReference>
<dbReference type="GO" id="GO:0000122">
    <property type="term" value="P:negative regulation of transcription by RNA polymerase II"/>
    <property type="evidence" value="ECO:0000250"/>
    <property type="project" value="UniProtKB"/>
</dbReference>
<dbReference type="GO" id="GO:0000956">
    <property type="term" value="P:nuclear-transcribed mRNA catabolic process"/>
    <property type="evidence" value="ECO:0000250"/>
    <property type="project" value="UniProtKB"/>
</dbReference>
<dbReference type="GO" id="GO:0043517">
    <property type="term" value="P:positive regulation of DNA damage response, signal transduction by p53 class mediator"/>
    <property type="evidence" value="ECO:0000250"/>
    <property type="project" value="UniProtKB"/>
</dbReference>
<dbReference type="GO" id="GO:0045893">
    <property type="term" value="P:positive regulation of DNA-templated transcription"/>
    <property type="evidence" value="ECO:0000314"/>
    <property type="project" value="MGI"/>
</dbReference>
<dbReference type="GO" id="GO:0006606">
    <property type="term" value="P:protein import into nucleus"/>
    <property type="evidence" value="ECO:0000316"/>
    <property type="project" value="MGI"/>
</dbReference>
<dbReference type="GO" id="GO:0000381">
    <property type="term" value="P:regulation of alternative mRNA splicing, via spliceosome"/>
    <property type="evidence" value="ECO:0000314"/>
    <property type="project" value="UniProtKB"/>
</dbReference>
<dbReference type="GO" id="GO:0060765">
    <property type="term" value="P:regulation of androgen receptor signaling pathway"/>
    <property type="evidence" value="ECO:0000250"/>
    <property type="project" value="UniProtKB"/>
</dbReference>
<dbReference type="GO" id="GO:0045667">
    <property type="term" value="P:regulation of osteoblast differentiation"/>
    <property type="evidence" value="ECO:0000315"/>
    <property type="project" value="UniProtKB"/>
</dbReference>
<dbReference type="GO" id="GO:2001014">
    <property type="term" value="P:regulation of skeletal muscle cell differentiation"/>
    <property type="evidence" value="ECO:0000315"/>
    <property type="project" value="UniProtKB"/>
</dbReference>
<dbReference type="GO" id="GO:0006357">
    <property type="term" value="P:regulation of transcription by RNA polymerase II"/>
    <property type="evidence" value="ECO:0000250"/>
    <property type="project" value="UniProtKB"/>
</dbReference>
<dbReference type="CDD" id="cd18049">
    <property type="entry name" value="DEADc_DDX5"/>
    <property type="match status" value="1"/>
</dbReference>
<dbReference type="CDD" id="cd18787">
    <property type="entry name" value="SF2_C_DEAD"/>
    <property type="match status" value="1"/>
</dbReference>
<dbReference type="FunFam" id="3.40.50.300:FF:000008">
    <property type="entry name" value="ATP-dependent RNA helicase RhlB"/>
    <property type="match status" value="1"/>
</dbReference>
<dbReference type="FunFam" id="3.40.50.300:FF:000079">
    <property type="entry name" value="probable ATP-dependent RNA helicase DDX17"/>
    <property type="match status" value="1"/>
</dbReference>
<dbReference type="Gene3D" id="3.40.50.300">
    <property type="entry name" value="P-loop containing nucleotide triphosphate hydrolases"/>
    <property type="match status" value="2"/>
</dbReference>
<dbReference type="InterPro" id="IPR011545">
    <property type="entry name" value="DEAD/DEAH_box_helicase_dom"/>
</dbReference>
<dbReference type="InterPro" id="IPR014001">
    <property type="entry name" value="Helicase_ATP-bd"/>
</dbReference>
<dbReference type="InterPro" id="IPR001650">
    <property type="entry name" value="Helicase_C-like"/>
</dbReference>
<dbReference type="InterPro" id="IPR027417">
    <property type="entry name" value="P-loop_NTPase"/>
</dbReference>
<dbReference type="InterPro" id="IPR012587">
    <property type="entry name" value="P68_rpt"/>
</dbReference>
<dbReference type="InterPro" id="IPR000629">
    <property type="entry name" value="RNA-helicase_DEAD-box_CS"/>
</dbReference>
<dbReference type="InterPro" id="IPR014014">
    <property type="entry name" value="RNA_helicase_DEAD_Q_motif"/>
</dbReference>
<dbReference type="PANTHER" id="PTHR47958">
    <property type="entry name" value="ATP-DEPENDENT RNA HELICASE DBP3"/>
    <property type="match status" value="1"/>
</dbReference>
<dbReference type="Pfam" id="PF00270">
    <property type="entry name" value="DEAD"/>
    <property type="match status" value="1"/>
</dbReference>
<dbReference type="Pfam" id="PF00271">
    <property type="entry name" value="Helicase_C"/>
    <property type="match status" value="1"/>
</dbReference>
<dbReference type="Pfam" id="PF08061">
    <property type="entry name" value="P68HR"/>
    <property type="match status" value="2"/>
</dbReference>
<dbReference type="SMART" id="SM00487">
    <property type="entry name" value="DEXDc"/>
    <property type="match status" value="1"/>
</dbReference>
<dbReference type="SMART" id="SM00490">
    <property type="entry name" value="HELICc"/>
    <property type="match status" value="1"/>
</dbReference>
<dbReference type="SMART" id="SM01414">
    <property type="entry name" value="P68HR"/>
    <property type="match status" value="2"/>
</dbReference>
<dbReference type="SUPFAM" id="SSF52540">
    <property type="entry name" value="P-loop containing nucleoside triphosphate hydrolases"/>
    <property type="match status" value="1"/>
</dbReference>
<dbReference type="PROSITE" id="PS00039">
    <property type="entry name" value="DEAD_ATP_HELICASE"/>
    <property type="match status" value="1"/>
</dbReference>
<dbReference type="PROSITE" id="PS51192">
    <property type="entry name" value="HELICASE_ATP_BIND_1"/>
    <property type="match status" value="1"/>
</dbReference>
<dbReference type="PROSITE" id="PS51194">
    <property type="entry name" value="HELICASE_CTER"/>
    <property type="match status" value="1"/>
</dbReference>
<dbReference type="PROSITE" id="PS51195">
    <property type="entry name" value="Q_MOTIF"/>
    <property type="match status" value="1"/>
</dbReference>
<sequence length="614" mass="69290">MSSYSSDRDRGRDRGFGAPRFGGSRTGPLSGKKFGNPGEKLVKKKWNLDELPKFEKNFYQEHPDLARRTAQEVDTYRRSKEITVRGHNCPKPVLNFYEANFPANVMDVIARQNFTEPTAIQAQGWPVALSGLDMVGVAQTGSGKTLSYLLPAIVHINHQPFLERGDGPICLVLAPTRELAQQVQQVAAEYCRACRLKSTCIYGGAPKGPQIRDLERGVEICIATPGRLIDFLECGKTNLRRTTYLVLDEADRMLDMGFEPQIRKIVDQIRPDRQTLMWSATWPKEVRQLAEDFLKDYIHINIGALELSANHNILQIVDVCHDVEKDEKLIRLMEEIMSEKENKTIVFVETKRRCDELTRKMRRDGWPAMGIHGDKSQQERDWVLNEFKHGKAPILIATDVASRGLDVEDVKFVINYDYPNSSEDYIHRIGRTARSTKTGTAYTFFTPNNIKQVSDLISVLREANQAINPKLLQLVEDRGSGRSRGRGGMKDDRRDRYSAGKRGGFNTFRDRENYDRGYSNLLKRDFGAKTQNGVYSAANYTNGSFGSNFVSAGIQTSFRTGNPTGTYQNGYDSTQQYGSNVANMHNGMNQQAYAYPLPQAAPMIGYPMPTGYSQ</sequence>
<gene>
    <name type="primary">Ddx5</name>
    <name type="synonym">Tnz2</name>
</gene>
<comment type="function">
    <text evidence="6 7 10">Involved in the alternative regulation of pre-mRNA splicing; its RNA helicase activity is necessary for increasing tau exon 10 inclusion and occurs in a RBM4-dependent manner. Binds to the tau pre-mRNA in the stem-loop region downstream of exon 10. The rate of ATP hydrolysis is highly stimulated by single-stranded RNA. Involved in transcriptional regulation; the function is independent of the RNA helicase activity. Transcriptional coactivator for androgen receptor AR but probably not ESR1. Synergizes with DDX17 and SRA1 RNA to activate MYOD1 transcriptional activity and involved in skeletal muscle differentiation. Transcriptional coactivator for p53/TP53 and involved in p53/TP53 transcriptional response to DNA damage and p53/TP53-dependent apoptosis. Transcriptional coactivator for RUNX2 and involved in regulation of osteoblast differentiation. Acts as a transcriptional repressor in a promoter-specific manner; the function probably involves association with histone deacetylases, such as HDAC1. As component of a large PER complex is involved in the inhibition of 3' transcriptional termination of circadian target genes such as PER1 and NR1D1 and the control of the circadian rhythms.</text>
</comment>
<comment type="catalytic activity">
    <reaction>
        <text>ATP + H2O = ADP + phosphate + H(+)</text>
        <dbReference type="Rhea" id="RHEA:13065"/>
        <dbReference type="ChEBI" id="CHEBI:15377"/>
        <dbReference type="ChEBI" id="CHEBI:15378"/>
        <dbReference type="ChEBI" id="CHEBI:30616"/>
        <dbReference type="ChEBI" id="CHEBI:43474"/>
        <dbReference type="ChEBI" id="CHEBI:456216"/>
        <dbReference type="EC" id="3.6.4.13"/>
    </reaction>
</comment>
<comment type="subunit">
    <text evidence="2 8 9 10">Identified in the spliceosome C complex. Component of a ribonucleoprotein complex containing mRNAs and RNA-binding proteins including DDX5, HNRNPH2 and SRSF1 as well as splicing regulator ARVCF (By similarity). Interacts with RBM4; the interaction occurs in an RNA-independent manner. Interacts with AGO1 and AGO2. Interacts with ESR1, AR, EP300, CREBBP, POLR2A, TP53, RUNX2 and HDAC1. Self-associates. Interacts with DDX17. Interacts with BRDT. The large PER complex involved in the repression of transcriptional termination is composed of at least PER2, CDK9, DDX5, DHX9, NCBP1 and POLR2A (active). Interacts with DHX36; this interaction occurs in a RNA-dependent manner (By similarity). Interacts with NUPR1 (PubMed:19723804). Interacts with ERCC6 (By similarity). Interacts with DDX3X in the cytoplasm; this interaction may be more efficient when both proteins are unphosphorylated (By similarity).</text>
</comment>
<comment type="interaction">
    <interactant intactId="EBI-643076">
        <id>Q61656</id>
    </interactant>
    <interactant intactId="EBI-11617845">
        <id>Q63014</id>
        <label>Akap8</label>
    </interactant>
    <organismsDiffer>true</organismsDiffer>
    <experiments>4</experiments>
</comment>
<comment type="subcellular location">
    <subcellularLocation>
        <location evidence="2">Nucleus</location>
    </subcellularLocation>
    <subcellularLocation>
        <location evidence="2">Nucleus</location>
        <location evidence="2">Nucleolus</location>
    </subcellularLocation>
    <subcellularLocation>
        <location evidence="2">Cytoplasm</location>
    </subcellularLocation>
    <text evidence="2">During the G0 phase, predominantly located in the nucleus. Cytoplasmic levels increase during the G1/S phase. During the M phase, located at the vicinity of the condensed chromosomes. At G1, localizes in the cytoplasm.</text>
</comment>
<comment type="PTM">
    <text evidence="2">Sumoylated; sumoylation, promoted by PIAS1, promotes interaction with HDAC1 and transcriptional repression activity. Sumoylation also significantly increases stability, and reduces polyubiquitination (By similarity).</text>
</comment>
<comment type="PTM">
    <text evidence="2">Polyubiquitinated, leading to proteasomal degradation.</text>
</comment>
<comment type="PTM">
    <text evidence="2">Weakly phosphorylated in the G1/S phase of the cell cycle and much more at G2/M, especially at Thr and Tyr residues.</text>
</comment>
<comment type="similarity">
    <text evidence="11">Belongs to the DEAD box helicase family. DDX5/DBP2 subfamily.</text>
</comment>
<comment type="caution">
    <text evidence="11">Silenced gene expression via RNA interference in PubMed:17011493 and PubMed:17960593 was simultaneously performed with DDX5 and DDX17; siRNA-resistant DDX5 expression was able to rescue the effect in muscle differentiation.</text>
</comment>
<feature type="chain" id="PRO_0000054992" description="Probable ATP-dependent RNA helicase DDX5">
    <location>
        <begin position="1"/>
        <end position="614"/>
    </location>
</feature>
<feature type="domain" description="Helicase ATP-binding" evidence="3">
    <location>
        <begin position="125"/>
        <end position="300"/>
    </location>
</feature>
<feature type="domain" description="Helicase C-terminal" evidence="4">
    <location>
        <begin position="328"/>
        <end position="475"/>
    </location>
</feature>
<feature type="region of interest" description="Disordered" evidence="5">
    <location>
        <begin position="1"/>
        <end position="39"/>
    </location>
</feature>
<feature type="region of interest" description="Transactivation domain" evidence="1">
    <location>
        <begin position="477"/>
        <end position="614"/>
    </location>
</feature>
<feature type="region of interest" description="Disordered" evidence="5">
    <location>
        <begin position="477"/>
        <end position="504"/>
    </location>
</feature>
<feature type="short sequence motif" description="Q motif">
    <location>
        <begin position="94"/>
        <end position="122"/>
    </location>
</feature>
<feature type="short sequence motif" description="DEAD box">
    <location>
        <begin position="248"/>
        <end position="251"/>
    </location>
</feature>
<feature type="compositionally biased region" description="Basic and acidic residues" evidence="5">
    <location>
        <begin position="1"/>
        <end position="15"/>
    </location>
</feature>
<feature type="compositionally biased region" description="Basic and acidic residues" evidence="5">
    <location>
        <begin position="488"/>
        <end position="498"/>
    </location>
</feature>
<feature type="binding site" evidence="3">
    <location>
        <begin position="114"/>
        <end position="116"/>
    </location>
    <ligand>
        <name>ATP</name>
        <dbReference type="ChEBI" id="CHEBI:30616"/>
    </ligand>
</feature>
<feature type="binding site" evidence="1">
    <location>
        <position position="121"/>
    </location>
    <ligand>
        <name>ATP</name>
        <dbReference type="ChEBI" id="CHEBI:30616"/>
    </ligand>
</feature>
<feature type="binding site" evidence="3">
    <location>
        <begin position="138"/>
        <end position="145"/>
    </location>
    <ligand>
        <name>ATP</name>
        <dbReference type="ChEBI" id="CHEBI:30616"/>
    </ligand>
</feature>
<feature type="modified residue" description="Phosphoserine" evidence="2">
    <location>
        <position position="24"/>
    </location>
</feature>
<feature type="modified residue" description="N6-acetyllysine; alternate" evidence="2">
    <location>
        <position position="32"/>
    </location>
</feature>
<feature type="modified residue" description="N6-acetyllysine" evidence="2">
    <location>
        <position position="33"/>
    </location>
</feature>
<feature type="modified residue" description="N6-acetyllysine" evidence="12">
    <location>
        <position position="40"/>
    </location>
</feature>
<feature type="modified residue" description="N6-acetyllysine" evidence="12">
    <location>
        <position position="236"/>
    </location>
</feature>
<feature type="modified residue" description="Phosphotyrosine" evidence="2">
    <location>
        <position position="297"/>
    </location>
</feature>
<feature type="modified residue" description="Phosphoserine" evidence="2">
    <location>
        <position position="480"/>
    </location>
</feature>
<feature type="cross-link" description="Glycyl lysine isopeptide (Lys-Gly) (interchain with G-Cter in SUMO2); alternate" evidence="2">
    <location>
        <position position="32"/>
    </location>
</feature>
<feature type="cross-link" description="Glycyl lysine isopeptide (Lys-Gly) (interchain with G-Cter in SUMO2)" evidence="2">
    <location>
        <position position="45"/>
    </location>
</feature>
<feature type="cross-link" description="Glycyl lysine isopeptide (Lys-Gly) (interchain with G-Cter in SUMO); alternate" evidence="1">
    <location>
        <position position="53"/>
    </location>
</feature>
<feature type="cross-link" description="Glycyl lysine isopeptide (Lys-Gly) (interchain with G-Cter in SUMO1); alternate" evidence="2">
    <location>
        <position position="53"/>
    </location>
</feature>
<feature type="cross-link" description="Glycyl lysine isopeptide (Lys-Gly) (interchain with G-Cter in SUMO2); alternate" evidence="2">
    <location>
        <position position="53"/>
    </location>
</feature>
<feature type="cross-link" description="Glycyl lysine isopeptide (Lys-Gly) (interchain with G-Cter in SUMO2)" evidence="2">
    <location>
        <position position="340"/>
    </location>
</feature>
<feature type="cross-link" description="Glycyl lysine isopeptide (Lys-Gly) (interchain with G-Cter in SUMO2)" evidence="2">
    <location>
        <position position="343"/>
    </location>
</feature>
<feature type="cross-link" description="Glycyl lysine isopeptide (Lys-Gly) (interchain with G-Cter in SUMO2)" evidence="2">
    <location>
        <position position="388"/>
    </location>
</feature>
<feature type="cross-link" description="Glycyl lysine isopeptide (Lys-Gly) (interchain with G-Cter in SUMO2)" evidence="2">
    <location>
        <position position="391"/>
    </location>
</feature>
<feature type="cross-link" description="Glycyl lysine isopeptide (Lys-Gly) (interchain with G-Cter in SUMO2)" evidence="2">
    <location>
        <position position="411"/>
    </location>
</feature>
<feature type="cross-link" description="Glycyl lysine isopeptide (Lys-Gly) (interchain with G-Cter in SUMO2)" evidence="2">
    <location>
        <position position="437"/>
    </location>
</feature>
<feature type="cross-link" description="Glycyl lysine isopeptide (Lys-Gly) (interchain with G-Cter in SUMO2)" evidence="2">
    <location>
        <position position="451"/>
    </location>
</feature>
<feature type="cross-link" description="Glycyl lysine isopeptide (Lys-Gly) (interchain with G-Cter in SUMO2)" evidence="2">
    <location>
        <position position="470"/>
    </location>
</feature>
<feature type="cross-link" description="Glycyl lysine isopeptide (Lys-Gly) (interchain with G-Cter in SUMO2)" evidence="2">
    <location>
        <position position="523"/>
    </location>
</feature>
<feature type="sequence conflict" description="In Ref. 1; CAA46581." evidence="11" ref="1">
    <original>Q</original>
    <variation>H</variation>
    <location>
        <position position="112"/>
    </location>
</feature>
<feature type="sequence conflict" description="In Ref. 1; CAA46581." evidence="11" ref="1">
    <original>Q</original>
    <variation>H</variation>
    <location>
        <position position="159"/>
    </location>
</feature>
<feature type="sequence conflict" description="In Ref. 1; CAA46581." evidence="11" ref="1">
    <original>L</original>
    <variation>V</variation>
    <location>
        <position position="597"/>
    </location>
</feature>
<feature type="sequence conflict" description="In Ref. 1; CAA46581." evidence="11" ref="1">
    <original>A</original>
    <variation>P</variation>
    <location>
        <position position="600"/>
    </location>
</feature>
<reference key="1">
    <citation type="journal article" date="1993" name="Life Sci.">
        <title>High-level expression in male germ cells of murine P68 RNA helicase mRNA.</title>
        <authorList>
            <person name="Lemaire L."/>
            <person name="Heinlein U.A.O."/>
        </authorList>
    </citation>
    <scope>NUCLEOTIDE SEQUENCE [MRNA]</scope>
    <source>
        <strain>C57BL/6J</strain>
        <tissue>Testis</tissue>
    </source>
</reference>
<reference key="2">
    <citation type="journal article" date="2009" name="PLoS Biol.">
        <title>Lineage-specific biology revealed by a finished genome assembly of the mouse.</title>
        <authorList>
            <person name="Church D.M."/>
            <person name="Goodstadt L."/>
            <person name="Hillier L.W."/>
            <person name="Zody M.C."/>
            <person name="Goldstein S."/>
            <person name="She X."/>
            <person name="Bult C.J."/>
            <person name="Agarwala R."/>
            <person name="Cherry J.L."/>
            <person name="DiCuccio M."/>
            <person name="Hlavina W."/>
            <person name="Kapustin Y."/>
            <person name="Meric P."/>
            <person name="Maglott D."/>
            <person name="Birtle Z."/>
            <person name="Marques A.C."/>
            <person name="Graves T."/>
            <person name="Zhou S."/>
            <person name="Teague B."/>
            <person name="Potamousis K."/>
            <person name="Churas C."/>
            <person name="Place M."/>
            <person name="Herschleb J."/>
            <person name="Runnheim R."/>
            <person name="Forrest D."/>
            <person name="Amos-Landgraf J."/>
            <person name="Schwartz D.C."/>
            <person name="Cheng Z."/>
            <person name="Lindblad-Toh K."/>
            <person name="Eichler E.E."/>
            <person name="Ponting C.P."/>
        </authorList>
    </citation>
    <scope>NUCLEOTIDE SEQUENCE [LARGE SCALE GENOMIC DNA]</scope>
    <source>
        <strain>C57BL/6J</strain>
    </source>
</reference>
<reference key="3">
    <citation type="journal article" date="2006" name="Dev. Cell">
        <title>The RNA helicases p68/p72 and the noncoding RNA SRA are coregulators of MyoD and skeletal muscle differentiation.</title>
        <authorList>
            <person name="Caretti G."/>
            <person name="Schiltz R.L."/>
            <person name="Dilworth F.J."/>
            <person name="Di Padova M."/>
            <person name="Zhao P."/>
            <person name="Ogryzko V."/>
            <person name="Fuller-Pace F.V."/>
            <person name="Hoffman E.P."/>
            <person name="Tapscott S.J."/>
            <person name="Sartorelli V."/>
        </authorList>
    </citation>
    <scope>FUNCTION</scope>
</reference>
<reference key="4">
    <citation type="journal article" date="2008" name="J. Cell. Biochem.">
        <title>p68 (Ddx5) interacts with Runx2 and regulates osteoblast differentiation.</title>
        <authorList>
            <person name="Jensen E.D."/>
            <person name="Niu L."/>
            <person name="Caretti G."/>
            <person name="Nicol S.M."/>
            <person name="Teplyuk N."/>
            <person name="Stein G.S."/>
            <person name="Sartorelli V."/>
            <person name="van Wijnen A.J."/>
            <person name="Fuller-Pace F.V."/>
            <person name="Westendorf J.J."/>
        </authorList>
    </citation>
    <scope>FUNCTION</scope>
</reference>
<reference key="5">
    <citation type="journal article" date="2009" name="J. Cell Sci.">
        <title>The small chromatin-binding protein p8 coordinates the association of anti-proliferative and pro-myogenic proteins at the myogenin promoter.</title>
        <authorList>
            <person name="Sambasivan R."/>
            <person name="Cheedipudi S."/>
            <person name="Pasupuleti N."/>
            <person name="Saleh A."/>
            <person name="Pavlath G.K."/>
            <person name="Dhawan J."/>
        </authorList>
    </citation>
    <scope>INTERACTION WITH NUPR1</scope>
</reference>
<reference key="6">
    <citation type="journal article" date="2010" name="Cell">
        <title>A tissue-specific atlas of mouse protein phosphorylation and expression.</title>
        <authorList>
            <person name="Huttlin E.L."/>
            <person name="Jedrychowski M.P."/>
            <person name="Elias J.E."/>
            <person name="Goswami T."/>
            <person name="Rad R."/>
            <person name="Beausoleil S.A."/>
            <person name="Villen J."/>
            <person name="Haas W."/>
            <person name="Sowa M.E."/>
            <person name="Gygi S.P."/>
        </authorList>
    </citation>
    <scope>IDENTIFICATION BY MASS SPECTROMETRY [LARGE SCALE ANALYSIS]</scope>
    <source>
        <tissue>Brain</tissue>
        <tissue>Brown adipose tissue</tissue>
        <tissue>Heart</tissue>
        <tissue>Kidney</tissue>
        <tissue>Liver</tissue>
        <tissue>Lung</tissue>
        <tissue>Pancreas</tissue>
        <tissue>Spleen</tissue>
        <tissue>Testis</tissue>
    </source>
</reference>
<reference key="7">
    <citation type="journal article" date="2012" name="Nucleic Acids Res.">
        <title>The testis-specific double bromodomain-containing protein BRDT forms a complex with multiple spliceosome components and is required for mRNA splicing and 3'-UTR truncation in round spermatids.</title>
        <authorList>
            <person name="Berkovits B.D."/>
            <person name="Wang L."/>
            <person name="Guarnieri P."/>
            <person name="Wolgemuth D.J."/>
        </authorList>
    </citation>
    <scope>INTERACTION WITH BRDT</scope>
</reference>
<reference key="8">
    <citation type="journal article" date="2012" name="Science">
        <title>Feedback regulation of transcriptional termination by the mammalian circadian clock PERIOD complex.</title>
        <authorList>
            <person name="Padmanabhan K."/>
            <person name="Robles M.S."/>
            <person name="Westerling T."/>
            <person name="Weitz C.J."/>
        </authorList>
    </citation>
    <scope>FUNCTION IN CIRCADIAN RHYTHMS</scope>
    <scope>IDENTIFICATION IN A LARGE PER COMPLEX</scope>
    <scope>SUBCELLULAR LOCATION</scope>
</reference>
<reference key="9">
    <citation type="journal article" date="2013" name="Mol. Cell">
        <title>SIRT5-mediated lysine desuccinylation impacts diverse metabolic pathways.</title>
        <authorList>
            <person name="Park J."/>
            <person name="Chen Y."/>
            <person name="Tishkoff D.X."/>
            <person name="Peng C."/>
            <person name="Tan M."/>
            <person name="Dai L."/>
            <person name="Xie Z."/>
            <person name="Zhang Y."/>
            <person name="Zwaans B.M."/>
            <person name="Skinner M.E."/>
            <person name="Lombard D.B."/>
            <person name="Zhao Y."/>
        </authorList>
    </citation>
    <scope>ACETYLATION [LARGE SCALE ANALYSIS] AT LYS-40 AND LYS-236</scope>
    <scope>IDENTIFICATION BY MASS SPECTROMETRY [LARGE SCALE ANALYSIS]</scope>
    <source>
        <tissue>Embryonic fibroblast</tissue>
    </source>
</reference>
<proteinExistence type="evidence at protein level"/>
<accession>Q61656</accession>
<accession>E9Q105</accession>